<feature type="chain" id="PRO_0000238814" description="Cytochrome c-type biogenesis protein CcmE">
    <location>
        <begin position="1"/>
        <end position="149"/>
    </location>
</feature>
<feature type="topological domain" description="Cytoplasmic" evidence="1">
    <location>
        <begin position="1"/>
        <end position="8"/>
    </location>
</feature>
<feature type="transmembrane region" description="Helical; Signal-anchor for type II membrane protein" evidence="1">
    <location>
        <begin position="9"/>
        <end position="29"/>
    </location>
</feature>
<feature type="topological domain" description="Periplasmic" evidence="1">
    <location>
        <begin position="30"/>
        <end position="149"/>
    </location>
</feature>
<feature type="binding site" description="covalent" evidence="1">
    <location>
        <position position="124"/>
    </location>
    <ligand>
        <name>heme</name>
        <dbReference type="ChEBI" id="CHEBI:30413"/>
    </ligand>
</feature>
<feature type="binding site" description="axial binding residue" evidence="1">
    <location>
        <position position="128"/>
    </location>
    <ligand>
        <name>heme</name>
        <dbReference type="ChEBI" id="CHEBI:30413"/>
    </ligand>
    <ligandPart>
        <name>Fe</name>
        <dbReference type="ChEBI" id="CHEBI:18248"/>
    </ligandPart>
</feature>
<comment type="function">
    <text evidence="1">Heme chaperone required for the biogenesis of c-type cytochromes. Transiently binds heme delivered by CcmC and transfers the heme to apo-cytochromes in a process facilitated by CcmF and CcmH.</text>
</comment>
<comment type="subcellular location">
    <subcellularLocation>
        <location evidence="1">Cell inner membrane</location>
        <topology evidence="1">Single-pass type II membrane protein</topology>
        <orientation evidence="1">Periplasmic side</orientation>
    </subcellularLocation>
</comment>
<comment type="similarity">
    <text evidence="1">Belongs to the CcmE/CycJ family.</text>
</comment>
<organism>
    <name type="scientific">Hahella chejuensis (strain KCTC 2396)</name>
    <dbReference type="NCBI Taxonomy" id="349521"/>
    <lineage>
        <taxon>Bacteria</taxon>
        <taxon>Pseudomonadati</taxon>
        <taxon>Pseudomonadota</taxon>
        <taxon>Gammaproteobacteria</taxon>
        <taxon>Oceanospirillales</taxon>
        <taxon>Hahellaceae</taxon>
        <taxon>Hahella</taxon>
    </lineage>
</organism>
<reference key="1">
    <citation type="journal article" date="2005" name="Nucleic Acids Res.">
        <title>Genomic blueprint of Hahella chejuensis, a marine microbe producing an algicidal agent.</title>
        <authorList>
            <person name="Jeong H."/>
            <person name="Yim J.H."/>
            <person name="Lee C."/>
            <person name="Choi S.-H."/>
            <person name="Park Y.K."/>
            <person name="Yoon S.H."/>
            <person name="Hur C.-G."/>
            <person name="Kang H.-Y."/>
            <person name="Kim D."/>
            <person name="Lee H.H."/>
            <person name="Park K.H."/>
            <person name="Park S.-H."/>
            <person name="Park H.-S."/>
            <person name="Lee H.K."/>
            <person name="Oh T.K."/>
            <person name="Kim J.F."/>
        </authorList>
    </citation>
    <scope>NUCLEOTIDE SEQUENCE [LARGE SCALE GENOMIC DNA]</scope>
    <source>
        <strain>KCTC 2396</strain>
    </source>
</reference>
<name>CCME_HAHCH</name>
<dbReference type="EMBL" id="CP000155">
    <property type="protein sequence ID" value="ABC31071.1"/>
    <property type="molecule type" value="Genomic_DNA"/>
</dbReference>
<dbReference type="RefSeq" id="WP_011398138.1">
    <property type="nucleotide sequence ID" value="NC_007645.1"/>
</dbReference>
<dbReference type="SMR" id="Q2SE53"/>
<dbReference type="STRING" id="349521.HCH_04365"/>
<dbReference type="KEGG" id="hch:HCH_04365"/>
<dbReference type="eggNOG" id="COG2332">
    <property type="taxonomic scope" value="Bacteria"/>
</dbReference>
<dbReference type="HOGENOM" id="CLU_079503_1_1_6"/>
<dbReference type="OrthoDB" id="9793584at2"/>
<dbReference type="Proteomes" id="UP000000238">
    <property type="component" value="Chromosome"/>
</dbReference>
<dbReference type="GO" id="GO:0005886">
    <property type="term" value="C:plasma membrane"/>
    <property type="evidence" value="ECO:0007669"/>
    <property type="project" value="UniProtKB-SubCell"/>
</dbReference>
<dbReference type="GO" id="GO:0020037">
    <property type="term" value="F:heme binding"/>
    <property type="evidence" value="ECO:0007669"/>
    <property type="project" value="InterPro"/>
</dbReference>
<dbReference type="GO" id="GO:0046872">
    <property type="term" value="F:metal ion binding"/>
    <property type="evidence" value="ECO:0007669"/>
    <property type="project" value="UniProtKB-KW"/>
</dbReference>
<dbReference type="GO" id="GO:0017004">
    <property type="term" value="P:cytochrome complex assembly"/>
    <property type="evidence" value="ECO:0007669"/>
    <property type="project" value="UniProtKB-KW"/>
</dbReference>
<dbReference type="FunFam" id="2.40.50.140:FF:000104">
    <property type="entry name" value="Cytochrome c-type biogenesis protein CcmE"/>
    <property type="match status" value="1"/>
</dbReference>
<dbReference type="Gene3D" id="2.40.50.140">
    <property type="entry name" value="Nucleic acid-binding proteins"/>
    <property type="match status" value="1"/>
</dbReference>
<dbReference type="HAMAP" id="MF_01959">
    <property type="entry name" value="CcmE"/>
    <property type="match status" value="1"/>
</dbReference>
<dbReference type="InterPro" id="IPR004329">
    <property type="entry name" value="CcmE"/>
</dbReference>
<dbReference type="InterPro" id="IPR036127">
    <property type="entry name" value="CcmE-like_sf"/>
</dbReference>
<dbReference type="InterPro" id="IPR012340">
    <property type="entry name" value="NA-bd_OB-fold"/>
</dbReference>
<dbReference type="NCBIfam" id="NF009638">
    <property type="entry name" value="PRK13165.1"/>
    <property type="match status" value="1"/>
</dbReference>
<dbReference type="NCBIfam" id="NF009727">
    <property type="entry name" value="PRK13254.1-1"/>
    <property type="match status" value="1"/>
</dbReference>
<dbReference type="NCBIfam" id="NF009729">
    <property type="entry name" value="PRK13254.1-3"/>
    <property type="match status" value="1"/>
</dbReference>
<dbReference type="NCBIfam" id="NF009731">
    <property type="entry name" value="PRK13254.1-5"/>
    <property type="match status" value="1"/>
</dbReference>
<dbReference type="PANTHER" id="PTHR34128">
    <property type="entry name" value="CYTOCHROME C-TYPE BIOGENESIS PROTEIN CCME HOMOLOG, MITOCHONDRIAL"/>
    <property type="match status" value="1"/>
</dbReference>
<dbReference type="PANTHER" id="PTHR34128:SF2">
    <property type="entry name" value="CYTOCHROME C-TYPE BIOGENESIS PROTEIN CCME HOMOLOG, MITOCHONDRIAL"/>
    <property type="match status" value="1"/>
</dbReference>
<dbReference type="Pfam" id="PF03100">
    <property type="entry name" value="CcmE"/>
    <property type="match status" value="1"/>
</dbReference>
<dbReference type="SUPFAM" id="SSF82093">
    <property type="entry name" value="Heme chaperone CcmE"/>
    <property type="match status" value="1"/>
</dbReference>
<gene>
    <name evidence="1" type="primary">ccmE</name>
    <name evidence="1" type="synonym">cycJ</name>
    <name type="ordered locus">HCH_04365</name>
</gene>
<evidence type="ECO:0000255" key="1">
    <source>
        <dbReference type="HAMAP-Rule" id="MF_01959"/>
    </source>
</evidence>
<accession>Q2SE53</accession>
<keyword id="KW-0997">Cell inner membrane</keyword>
<keyword id="KW-1003">Cell membrane</keyword>
<keyword id="KW-0201">Cytochrome c-type biogenesis</keyword>
<keyword id="KW-0349">Heme</keyword>
<keyword id="KW-0408">Iron</keyword>
<keyword id="KW-0472">Membrane</keyword>
<keyword id="KW-0479">Metal-binding</keyword>
<keyword id="KW-1185">Reference proteome</keyword>
<keyword id="KW-0735">Signal-anchor</keyword>
<keyword id="KW-0812">Transmembrane</keyword>
<keyword id="KW-1133">Transmembrane helix</keyword>
<sequence length="149" mass="15966">MNPKRKQRLIIVSFLVIGVSATVGLIMAALSSNVNHFYNPTEVAQGAAPVDKSIRVGGMVVDGSVSRDGQSLAVAFTVTDYNSNVDVKYTGILPDLFREGQGIVATGKLDAQGVFQAEEVLAKHDEKYMPPEVQRALDKAQDAAPAQTY</sequence>
<proteinExistence type="inferred from homology"/>
<protein>
    <recommendedName>
        <fullName evidence="1">Cytochrome c-type biogenesis protein CcmE</fullName>
    </recommendedName>
    <alternativeName>
        <fullName evidence="1">Cytochrome c maturation protein E</fullName>
    </alternativeName>
    <alternativeName>
        <fullName evidence="1">Heme chaperone CcmE</fullName>
    </alternativeName>
</protein>